<dbReference type="EC" id="2.1.2.1"/>
<dbReference type="EMBL" id="M81918">
    <property type="protein sequence ID" value="AAA31967.2"/>
    <property type="molecule type" value="Genomic_DNA"/>
</dbReference>
<dbReference type="EMBL" id="BX908789">
    <property type="protein sequence ID" value="CAF05873.1"/>
    <property type="molecule type" value="Genomic_DNA"/>
</dbReference>
<dbReference type="EMBL" id="CM002242">
    <property type="protein sequence ID" value="EAA30682.1"/>
    <property type="molecule type" value="Genomic_DNA"/>
</dbReference>
<dbReference type="PIR" id="A42241">
    <property type="entry name" value="A42241"/>
</dbReference>
<dbReference type="RefSeq" id="XP_959918.1">
    <property type="nucleotide sequence ID" value="XM_954825.3"/>
</dbReference>
<dbReference type="SMR" id="P34898"/>
<dbReference type="FunCoup" id="P34898">
    <property type="interactions" value="848"/>
</dbReference>
<dbReference type="STRING" id="367110.P34898"/>
<dbReference type="PaxDb" id="5141-EFNCRP00000003110"/>
<dbReference type="EnsemblFungi" id="EAA30682">
    <property type="protein sequence ID" value="EAA30682"/>
    <property type="gene ID" value="NCU02274"/>
</dbReference>
<dbReference type="GeneID" id="3876040"/>
<dbReference type="KEGG" id="ncr:NCU02274"/>
<dbReference type="VEuPathDB" id="FungiDB:NCU02274"/>
<dbReference type="HOGENOM" id="CLU_022477_0_1_1"/>
<dbReference type="InParanoid" id="P34898"/>
<dbReference type="OMA" id="CQFANVQ"/>
<dbReference type="OrthoDB" id="10265628at2759"/>
<dbReference type="UniPathway" id="UPA00193"/>
<dbReference type="Proteomes" id="UP000001805">
    <property type="component" value="Chromosome 7, Linkage Group VII"/>
</dbReference>
<dbReference type="GO" id="GO:0005737">
    <property type="term" value="C:cytoplasm"/>
    <property type="evidence" value="ECO:0000318"/>
    <property type="project" value="GO_Central"/>
</dbReference>
<dbReference type="GO" id="GO:0005739">
    <property type="term" value="C:mitochondrion"/>
    <property type="evidence" value="ECO:0000318"/>
    <property type="project" value="GO_Central"/>
</dbReference>
<dbReference type="GO" id="GO:0004372">
    <property type="term" value="F:glycine hydroxymethyltransferase activity"/>
    <property type="evidence" value="ECO:0000318"/>
    <property type="project" value="GO_Central"/>
</dbReference>
<dbReference type="GO" id="GO:0030170">
    <property type="term" value="F:pyridoxal phosphate binding"/>
    <property type="evidence" value="ECO:0000318"/>
    <property type="project" value="GO_Central"/>
</dbReference>
<dbReference type="GO" id="GO:0019264">
    <property type="term" value="P:glycine biosynthetic process from serine"/>
    <property type="evidence" value="ECO:0000318"/>
    <property type="project" value="GO_Central"/>
</dbReference>
<dbReference type="GO" id="GO:0035999">
    <property type="term" value="P:tetrahydrofolate interconversion"/>
    <property type="evidence" value="ECO:0007669"/>
    <property type="project" value="UniProtKB-UniPathway"/>
</dbReference>
<dbReference type="GO" id="GO:0046653">
    <property type="term" value="P:tetrahydrofolate metabolic process"/>
    <property type="evidence" value="ECO:0000318"/>
    <property type="project" value="GO_Central"/>
</dbReference>
<dbReference type="CDD" id="cd00378">
    <property type="entry name" value="SHMT"/>
    <property type="match status" value="1"/>
</dbReference>
<dbReference type="FunFam" id="3.40.640.10:FF:000097">
    <property type="entry name" value="Serine hydroxymethyltransferase"/>
    <property type="match status" value="1"/>
</dbReference>
<dbReference type="Gene3D" id="3.90.1150.10">
    <property type="entry name" value="Aspartate Aminotransferase, domain 1"/>
    <property type="match status" value="1"/>
</dbReference>
<dbReference type="Gene3D" id="3.40.640.10">
    <property type="entry name" value="Type I PLP-dependent aspartate aminotransferase-like (Major domain)"/>
    <property type="match status" value="1"/>
</dbReference>
<dbReference type="HAMAP" id="MF_00051">
    <property type="entry name" value="SHMT"/>
    <property type="match status" value="1"/>
</dbReference>
<dbReference type="InterPro" id="IPR015424">
    <property type="entry name" value="PyrdxlP-dep_Trfase"/>
</dbReference>
<dbReference type="InterPro" id="IPR015421">
    <property type="entry name" value="PyrdxlP-dep_Trfase_major"/>
</dbReference>
<dbReference type="InterPro" id="IPR015422">
    <property type="entry name" value="PyrdxlP-dep_Trfase_small"/>
</dbReference>
<dbReference type="InterPro" id="IPR001085">
    <property type="entry name" value="Ser_HO-MeTrfase"/>
</dbReference>
<dbReference type="InterPro" id="IPR049943">
    <property type="entry name" value="Ser_HO-MeTrfase-like"/>
</dbReference>
<dbReference type="InterPro" id="IPR019798">
    <property type="entry name" value="Ser_HO-MeTrfase_PLP_BS"/>
</dbReference>
<dbReference type="InterPro" id="IPR039429">
    <property type="entry name" value="SHMT-like_dom"/>
</dbReference>
<dbReference type="NCBIfam" id="NF000586">
    <property type="entry name" value="PRK00011.1"/>
    <property type="match status" value="1"/>
</dbReference>
<dbReference type="PANTHER" id="PTHR11680">
    <property type="entry name" value="SERINE HYDROXYMETHYLTRANSFERASE"/>
    <property type="match status" value="1"/>
</dbReference>
<dbReference type="PANTHER" id="PTHR11680:SF28">
    <property type="entry name" value="SERINE HYDROXYMETHYLTRANSFERASE, MITOCHONDRIAL"/>
    <property type="match status" value="1"/>
</dbReference>
<dbReference type="Pfam" id="PF00464">
    <property type="entry name" value="SHMT"/>
    <property type="match status" value="1"/>
</dbReference>
<dbReference type="PIRSF" id="PIRSF000412">
    <property type="entry name" value="SHMT"/>
    <property type="match status" value="1"/>
</dbReference>
<dbReference type="SUPFAM" id="SSF53383">
    <property type="entry name" value="PLP-dependent transferases"/>
    <property type="match status" value="1"/>
</dbReference>
<dbReference type="PROSITE" id="PS00096">
    <property type="entry name" value="SHMT"/>
    <property type="match status" value="1"/>
</dbReference>
<gene>
    <name type="primary">for</name>
    <name type="ORF">B13D24.080</name>
    <name type="ORF">NCU02274</name>
</gene>
<comment type="function">
    <text>Interconversion of serine and glycine.</text>
</comment>
<comment type="catalytic activity">
    <reaction>
        <text>(6R)-5,10-methylene-5,6,7,8-tetrahydrofolate + glycine + H2O = (6S)-5,6,7,8-tetrahydrofolate + L-serine</text>
        <dbReference type="Rhea" id="RHEA:15481"/>
        <dbReference type="ChEBI" id="CHEBI:15377"/>
        <dbReference type="ChEBI" id="CHEBI:15636"/>
        <dbReference type="ChEBI" id="CHEBI:33384"/>
        <dbReference type="ChEBI" id="CHEBI:57305"/>
        <dbReference type="ChEBI" id="CHEBI:57453"/>
        <dbReference type="EC" id="2.1.2.1"/>
    </reaction>
</comment>
<comment type="cofactor">
    <cofactor evidence="1">
        <name>pyridoxal 5'-phosphate</name>
        <dbReference type="ChEBI" id="CHEBI:597326"/>
    </cofactor>
</comment>
<comment type="pathway">
    <text>One-carbon metabolism; tetrahydrofolate interconversion.</text>
</comment>
<comment type="subunit">
    <text evidence="1">Homotetramer.</text>
</comment>
<comment type="subcellular location">
    <subcellularLocation>
        <location>Cytoplasm</location>
    </subcellularLocation>
</comment>
<comment type="miscellaneous">
    <text>In eukaryotes there are two forms of the enzymes: a cytosolic one and a mitochondrial one.</text>
</comment>
<comment type="similarity">
    <text evidence="2">Belongs to the SHMT family.</text>
</comment>
<proteinExistence type="inferred from homology"/>
<accession>P34898</accession>
<accession>Q7RVA9</accession>
<reference key="1">
    <citation type="journal article" date="1992" name="Mol. Cell. Biol.">
        <title>Characterization of the formate (for) locus, which encodes the cytosolic serine hydroxymethyltransferase of Neurospora crassa.</title>
        <authorList>
            <person name="McClung C.R."/>
            <person name="Davis C.R."/>
            <person name="Page K.M."/>
            <person name="Denome S.A."/>
        </authorList>
    </citation>
    <scope>NUCLEOTIDE SEQUENCE [GENOMIC DNA]</scope>
</reference>
<reference key="2">
    <citation type="journal article" date="2003" name="Nucleic Acids Res.">
        <title>What's in the genome of a filamentous fungus? Analysis of the Neurospora genome sequence.</title>
        <authorList>
            <person name="Mannhaupt G."/>
            <person name="Montrone C."/>
            <person name="Haase D."/>
            <person name="Mewes H.-W."/>
            <person name="Aign V."/>
            <person name="Hoheisel J.D."/>
            <person name="Fartmann B."/>
            <person name="Nyakatura G."/>
            <person name="Kempken F."/>
            <person name="Maier J."/>
            <person name="Schulte U."/>
        </authorList>
    </citation>
    <scope>NUCLEOTIDE SEQUENCE [LARGE SCALE GENOMIC DNA]</scope>
    <source>
        <strain>ATCC 24698 / 74-OR23-1A / CBS 708.71 / DSM 1257 / FGSC 987</strain>
    </source>
</reference>
<reference key="3">
    <citation type="journal article" date="2003" name="Nature">
        <title>The genome sequence of the filamentous fungus Neurospora crassa.</title>
        <authorList>
            <person name="Galagan J.E."/>
            <person name="Calvo S.E."/>
            <person name="Borkovich K.A."/>
            <person name="Selker E.U."/>
            <person name="Read N.D."/>
            <person name="Jaffe D.B."/>
            <person name="FitzHugh W."/>
            <person name="Ma L.-J."/>
            <person name="Smirnov S."/>
            <person name="Purcell S."/>
            <person name="Rehman B."/>
            <person name="Elkins T."/>
            <person name="Engels R."/>
            <person name="Wang S."/>
            <person name="Nielsen C.B."/>
            <person name="Butler J."/>
            <person name="Endrizzi M."/>
            <person name="Qui D."/>
            <person name="Ianakiev P."/>
            <person name="Bell-Pedersen D."/>
            <person name="Nelson M.A."/>
            <person name="Werner-Washburne M."/>
            <person name="Selitrennikoff C.P."/>
            <person name="Kinsey J.A."/>
            <person name="Braun E.L."/>
            <person name="Zelter A."/>
            <person name="Schulte U."/>
            <person name="Kothe G.O."/>
            <person name="Jedd G."/>
            <person name="Mewes H.-W."/>
            <person name="Staben C."/>
            <person name="Marcotte E."/>
            <person name="Greenberg D."/>
            <person name="Roy A."/>
            <person name="Foley K."/>
            <person name="Naylor J."/>
            <person name="Stange-Thomann N."/>
            <person name="Barrett R."/>
            <person name="Gnerre S."/>
            <person name="Kamal M."/>
            <person name="Kamvysselis M."/>
            <person name="Mauceli E.W."/>
            <person name="Bielke C."/>
            <person name="Rudd S."/>
            <person name="Frishman D."/>
            <person name="Krystofova S."/>
            <person name="Rasmussen C."/>
            <person name="Metzenberg R.L."/>
            <person name="Perkins D.D."/>
            <person name="Kroken S."/>
            <person name="Cogoni C."/>
            <person name="Macino G."/>
            <person name="Catcheside D.E.A."/>
            <person name="Li W."/>
            <person name="Pratt R.J."/>
            <person name="Osmani S.A."/>
            <person name="DeSouza C.P.C."/>
            <person name="Glass N.L."/>
            <person name="Orbach M.J."/>
            <person name="Berglund J.A."/>
            <person name="Voelker R."/>
            <person name="Yarden O."/>
            <person name="Plamann M."/>
            <person name="Seiler S."/>
            <person name="Dunlap J.C."/>
            <person name="Radford A."/>
            <person name="Aramayo R."/>
            <person name="Natvig D.O."/>
            <person name="Alex L.A."/>
            <person name="Mannhaupt G."/>
            <person name="Ebbole D.J."/>
            <person name="Freitag M."/>
            <person name="Paulsen I."/>
            <person name="Sachs M.S."/>
            <person name="Lander E.S."/>
            <person name="Nusbaum C."/>
            <person name="Birren B.W."/>
        </authorList>
    </citation>
    <scope>NUCLEOTIDE SEQUENCE [LARGE SCALE GENOMIC DNA]</scope>
    <source>
        <strain>ATCC 24698 / 74-OR23-1A / CBS 708.71 / DSM 1257 / FGSC 987</strain>
    </source>
</reference>
<keyword id="KW-0963">Cytoplasm</keyword>
<keyword id="KW-0554">One-carbon metabolism</keyword>
<keyword id="KW-0663">Pyridoxal phosphate</keyword>
<keyword id="KW-1185">Reference proteome</keyword>
<keyword id="KW-0808">Transferase</keyword>
<protein>
    <recommendedName>
        <fullName>Serine hydroxymethyltransferase, cytosolic</fullName>
        <shortName>SHMT</shortName>
        <ecNumber>2.1.2.1</ecNumber>
    </recommendedName>
    <alternativeName>
        <fullName>Glycine hydroxymethyltransferase</fullName>
    </alternativeName>
    <alternativeName>
        <fullName>Serine methylase</fullName>
    </alternativeName>
</protein>
<sequence>MSTYSLSETHKAMLEHSLVESDPQVAEIMKKEVQRQRESIILIASENVTSRAVFDALGSPMSNKYSEGLPGARYYGGNQHIDEIEVLCQNRALEAFHLDPKQWGVNVQCLSGSPANLQVYQAIMPVHGRLMGLDLPHGGHLSHGYQTPQRKISAVSTYFETMPYRVNIDTGLIDYDTLEKNAQLFRPKVLVAGTSAYCRLIDYERMRKIADSVGAYLVVDMAHISGLIASEVIPSPFLYADVVTTTTHKSLRGPRGAMIFFRRGVRSVDAKTGKETLYDLEDKINFSVFPGHQGGPHNHTITALAVALKQAASPEFKEYQQKVVANAKALEKKLKELGYKLVSDGTDSHMVLVDLRPIGVDGARVEFLLEQINITCNKNAVPGDKSALTPGGLRIGTPAMTSRGFGEADFEKVAVFVDEAVKLCKEIQASLPKEANKQKDFKAKIATSDIPRINELKQEIAAWSNTFPLPVEGWRYDAGL</sequence>
<evidence type="ECO:0000250" key="1"/>
<evidence type="ECO:0000305" key="2"/>
<name>GLYC_NEUCR</name>
<feature type="chain" id="PRO_0000113513" description="Serine hydroxymethyltransferase, cytosolic">
    <location>
        <begin position="1"/>
        <end position="480"/>
    </location>
</feature>
<feature type="modified residue" description="N6-(pyridoxal phosphate)lysine" evidence="1">
    <location>
        <position position="249"/>
    </location>
</feature>
<feature type="sequence conflict" description="In Ref. 1; AAA31967." evidence="2" ref="1">
    <location>
        <position position="262"/>
    </location>
</feature>
<organism>
    <name type="scientific">Neurospora crassa (strain ATCC 24698 / 74-OR23-1A / CBS 708.71 / DSM 1257 / FGSC 987)</name>
    <dbReference type="NCBI Taxonomy" id="367110"/>
    <lineage>
        <taxon>Eukaryota</taxon>
        <taxon>Fungi</taxon>
        <taxon>Dikarya</taxon>
        <taxon>Ascomycota</taxon>
        <taxon>Pezizomycotina</taxon>
        <taxon>Sordariomycetes</taxon>
        <taxon>Sordariomycetidae</taxon>
        <taxon>Sordariales</taxon>
        <taxon>Sordariaceae</taxon>
        <taxon>Neurospora</taxon>
    </lineage>
</organism>